<sequence>MSVLQVLHIPDERLRKVAKPVEEVNAEIQRIVDDMFETMYAEEGIGLAATQVDIHQRIIVIDVSENRDERLVLINPELLEKSGETGIEEGCLSIPEQRALVPRAEKVKIRALDRDGKPFELEAEGLLAICIQHEMDHLVGKLFMDYLSPLKQQRIRQKVEKLDRLKARA</sequence>
<name>DEF_ECO7I</name>
<gene>
    <name evidence="1" type="primary">def</name>
    <name type="ordered locus">ECIAI39_3781</name>
</gene>
<dbReference type="EC" id="3.5.1.88" evidence="1"/>
<dbReference type="EMBL" id="CU928164">
    <property type="protein sequence ID" value="CAR19895.1"/>
    <property type="molecule type" value="Genomic_DNA"/>
</dbReference>
<dbReference type="RefSeq" id="WP_000114986.1">
    <property type="nucleotide sequence ID" value="NC_011750.1"/>
</dbReference>
<dbReference type="RefSeq" id="YP_002409678.1">
    <property type="nucleotide sequence ID" value="NC_011750.1"/>
</dbReference>
<dbReference type="SMR" id="B7NLK6"/>
<dbReference type="STRING" id="585057.ECIAI39_3781"/>
<dbReference type="GeneID" id="93778701"/>
<dbReference type="KEGG" id="ect:ECIAI39_3781"/>
<dbReference type="PATRIC" id="fig|585057.6.peg.3918"/>
<dbReference type="HOGENOM" id="CLU_061901_2_1_6"/>
<dbReference type="Proteomes" id="UP000000749">
    <property type="component" value="Chromosome"/>
</dbReference>
<dbReference type="GO" id="GO:0046872">
    <property type="term" value="F:metal ion binding"/>
    <property type="evidence" value="ECO:0007669"/>
    <property type="project" value="UniProtKB-KW"/>
</dbReference>
<dbReference type="GO" id="GO:0042586">
    <property type="term" value="F:peptide deformylase activity"/>
    <property type="evidence" value="ECO:0007669"/>
    <property type="project" value="UniProtKB-UniRule"/>
</dbReference>
<dbReference type="GO" id="GO:0043686">
    <property type="term" value="P:co-translational protein modification"/>
    <property type="evidence" value="ECO:0007669"/>
    <property type="project" value="TreeGrafter"/>
</dbReference>
<dbReference type="GO" id="GO:0006412">
    <property type="term" value="P:translation"/>
    <property type="evidence" value="ECO:0007669"/>
    <property type="project" value="UniProtKB-UniRule"/>
</dbReference>
<dbReference type="CDD" id="cd00487">
    <property type="entry name" value="Pep_deformylase"/>
    <property type="match status" value="1"/>
</dbReference>
<dbReference type="FunFam" id="3.90.45.10:FF:000001">
    <property type="entry name" value="Peptide deformylase"/>
    <property type="match status" value="1"/>
</dbReference>
<dbReference type="Gene3D" id="3.90.45.10">
    <property type="entry name" value="Peptide deformylase"/>
    <property type="match status" value="1"/>
</dbReference>
<dbReference type="HAMAP" id="MF_00163">
    <property type="entry name" value="Pep_deformylase"/>
    <property type="match status" value="1"/>
</dbReference>
<dbReference type="InterPro" id="IPR023635">
    <property type="entry name" value="Peptide_deformylase"/>
</dbReference>
<dbReference type="InterPro" id="IPR036821">
    <property type="entry name" value="Peptide_deformylase_sf"/>
</dbReference>
<dbReference type="NCBIfam" id="TIGR00079">
    <property type="entry name" value="pept_deformyl"/>
    <property type="match status" value="1"/>
</dbReference>
<dbReference type="NCBIfam" id="NF001159">
    <property type="entry name" value="PRK00150.1-3"/>
    <property type="match status" value="1"/>
</dbReference>
<dbReference type="PANTHER" id="PTHR10458">
    <property type="entry name" value="PEPTIDE DEFORMYLASE"/>
    <property type="match status" value="1"/>
</dbReference>
<dbReference type="PANTHER" id="PTHR10458:SF21">
    <property type="entry name" value="PEPTIDE DEFORMYLASE"/>
    <property type="match status" value="1"/>
</dbReference>
<dbReference type="Pfam" id="PF01327">
    <property type="entry name" value="Pep_deformylase"/>
    <property type="match status" value="1"/>
</dbReference>
<dbReference type="PIRSF" id="PIRSF004749">
    <property type="entry name" value="Pep_def"/>
    <property type="match status" value="1"/>
</dbReference>
<dbReference type="PRINTS" id="PR01576">
    <property type="entry name" value="PDEFORMYLASE"/>
</dbReference>
<dbReference type="SUPFAM" id="SSF56420">
    <property type="entry name" value="Peptide deformylase"/>
    <property type="match status" value="1"/>
</dbReference>
<accession>B7NLK6</accession>
<keyword id="KW-0378">Hydrolase</keyword>
<keyword id="KW-0408">Iron</keyword>
<keyword id="KW-0479">Metal-binding</keyword>
<keyword id="KW-0648">Protein biosynthesis</keyword>
<proteinExistence type="inferred from homology"/>
<protein>
    <recommendedName>
        <fullName evidence="1">Peptide deformylase</fullName>
        <shortName evidence="1">PDF</shortName>
        <ecNumber evidence="1">3.5.1.88</ecNumber>
    </recommendedName>
    <alternativeName>
        <fullName evidence="1">Polypeptide deformylase</fullName>
    </alternativeName>
</protein>
<evidence type="ECO:0000255" key="1">
    <source>
        <dbReference type="HAMAP-Rule" id="MF_00163"/>
    </source>
</evidence>
<feature type="chain" id="PRO_1000200731" description="Peptide deformylase">
    <location>
        <begin position="1"/>
        <end position="169"/>
    </location>
</feature>
<feature type="active site" evidence="1">
    <location>
        <position position="134"/>
    </location>
</feature>
<feature type="binding site" evidence="1">
    <location>
        <position position="91"/>
    </location>
    <ligand>
        <name>Fe cation</name>
        <dbReference type="ChEBI" id="CHEBI:24875"/>
    </ligand>
</feature>
<feature type="binding site" evidence="1">
    <location>
        <position position="133"/>
    </location>
    <ligand>
        <name>Fe cation</name>
        <dbReference type="ChEBI" id="CHEBI:24875"/>
    </ligand>
</feature>
<feature type="binding site" evidence="1">
    <location>
        <position position="137"/>
    </location>
    <ligand>
        <name>Fe cation</name>
        <dbReference type="ChEBI" id="CHEBI:24875"/>
    </ligand>
</feature>
<reference key="1">
    <citation type="journal article" date="2009" name="PLoS Genet.">
        <title>Organised genome dynamics in the Escherichia coli species results in highly diverse adaptive paths.</title>
        <authorList>
            <person name="Touchon M."/>
            <person name="Hoede C."/>
            <person name="Tenaillon O."/>
            <person name="Barbe V."/>
            <person name="Baeriswyl S."/>
            <person name="Bidet P."/>
            <person name="Bingen E."/>
            <person name="Bonacorsi S."/>
            <person name="Bouchier C."/>
            <person name="Bouvet O."/>
            <person name="Calteau A."/>
            <person name="Chiapello H."/>
            <person name="Clermont O."/>
            <person name="Cruveiller S."/>
            <person name="Danchin A."/>
            <person name="Diard M."/>
            <person name="Dossat C."/>
            <person name="Karoui M.E."/>
            <person name="Frapy E."/>
            <person name="Garry L."/>
            <person name="Ghigo J.M."/>
            <person name="Gilles A.M."/>
            <person name="Johnson J."/>
            <person name="Le Bouguenec C."/>
            <person name="Lescat M."/>
            <person name="Mangenot S."/>
            <person name="Martinez-Jehanne V."/>
            <person name="Matic I."/>
            <person name="Nassif X."/>
            <person name="Oztas S."/>
            <person name="Petit M.A."/>
            <person name="Pichon C."/>
            <person name="Rouy Z."/>
            <person name="Ruf C.S."/>
            <person name="Schneider D."/>
            <person name="Tourret J."/>
            <person name="Vacherie B."/>
            <person name="Vallenet D."/>
            <person name="Medigue C."/>
            <person name="Rocha E.P.C."/>
            <person name="Denamur E."/>
        </authorList>
    </citation>
    <scope>NUCLEOTIDE SEQUENCE [LARGE SCALE GENOMIC DNA]</scope>
    <source>
        <strain>IAI39 / ExPEC</strain>
    </source>
</reference>
<organism>
    <name type="scientific">Escherichia coli O7:K1 (strain IAI39 / ExPEC)</name>
    <dbReference type="NCBI Taxonomy" id="585057"/>
    <lineage>
        <taxon>Bacteria</taxon>
        <taxon>Pseudomonadati</taxon>
        <taxon>Pseudomonadota</taxon>
        <taxon>Gammaproteobacteria</taxon>
        <taxon>Enterobacterales</taxon>
        <taxon>Enterobacteriaceae</taxon>
        <taxon>Escherichia</taxon>
    </lineage>
</organism>
<comment type="function">
    <text evidence="1">Removes the formyl group from the N-terminal Met of newly synthesized proteins. Requires at least a dipeptide for an efficient rate of reaction. N-terminal L-methionine is a prerequisite for activity but the enzyme has broad specificity at other positions.</text>
</comment>
<comment type="catalytic activity">
    <reaction evidence="1">
        <text>N-terminal N-formyl-L-methionyl-[peptide] + H2O = N-terminal L-methionyl-[peptide] + formate</text>
        <dbReference type="Rhea" id="RHEA:24420"/>
        <dbReference type="Rhea" id="RHEA-COMP:10639"/>
        <dbReference type="Rhea" id="RHEA-COMP:10640"/>
        <dbReference type="ChEBI" id="CHEBI:15377"/>
        <dbReference type="ChEBI" id="CHEBI:15740"/>
        <dbReference type="ChEBI" id="CHEBI:49298"/>
        <dbReference type="ChEBI" id="CHEBI:64731"/>
        <dbReference type="EC" id="3.5.1.88"/>
    </reaction>
</comment>
<comment type="cofactor">
    <cofactor evidence="1">
        <name>Fe(2+)</name>
        <dbReference type="ChEBI" id="CHEBI:29033"/>
    </cofactor>
    <text evidence="1">Binds 1 Fe(2+) ion.</text>
</comment>
<comment type="similarity">
    <text evidence="1">Belongs to the polypeptide deformylase family.</text>
</comment>